<gene>
    <name type="primary">ADGRE2</name>
    <name type="synonym">EMR2</name>
</gene>
<accession>Q2Q426</accession>
<dbReference type="EMBL" id="DQ227271">
    <property type="protein sequence ID" value="ABB53642.1"/>
    <property type="molecule type" value="mRNA"/>
</dbReference>
<dbReference type="RefSeq" id="NP_001033751.1">
    <property type="nucleotide sequence ID" value="NM_001038662.1"/>
</dbReference>
<dbReference type="SMR" id="Q2Q426"/>
<dbReference type="FunCoup" id="Q2Q426">
    <property type="interactions" value="358"/>
</dbReference>
<dbReference type="STRING" id="9544.ENSMMUP00000062538"/>
<dbReference type="MEROPS" id="P02.001"/>
<dbReference type="GlyCosmos" id="Q2Q426">
    <property type="glycosylation" value="10 sites, No reported glycans"/>
</dbReference>
<dbReference type="PaxDb" id="9544-ENSMMUP00000024916"/>
<dbReference type="GeneID" id="654420"/>
<dbReference type="KEGG" id="mcc:654420"/>
<dbReference type="CTD" id="30817"/>
<dbReference type="eggNOG" id="KOG4193">
    <property type="taxonomic scope" value="Eukaryota"/>
</dbReference>
<dbReference type="InParanoid" id="Q2Q426"/>
<dbReference type="OrthoDB" id="1100386at2759"/>
<dbReference type="Proteomes" id="UP000006718">
    <property type="component" value="Unassembled WGS sequence"/>
</dbReference>
<dbReference type="GO" id="GO:0031256">
    <property type="term" value="C:leading edge membrane"/>
    <property type="evidence" value="ECO:0000250"/>
    <property type="project" value="UniProtKB"/>
</dbReference>
<dbReference type="GO" id="GO:0005886">
    <property type="term" value="C:plasma membrane"/>
    <property type="evidence" value="ECO:0000318"/>
    <property type="project" value="GO_Central"/>
</dbReference>
<dbReference type="GO" id="GO:0032587">
    <property type="term" value="C:ruffle membrane"/>
    <property type="evidence" value="ECO:0007669"/>
    <property type="project" value="UniProtKB-SubCell"/>
</dbReference>
<dbReference type="GO" id="GO:0005509">
    <property type="term" value="F:calcium ion binding"/>
    <property type="evidence" value="ECO:0007669"/>
    <property type="project" value="InterPro"/>
</dbReference>
<dbReference type="GO" id="GO:0035374">
    <property type="term" value="F:chondroitin sulfate binding"/>
    <property type="evidence" value="ECO:0000250"/>
    <property type="project" value="UniProtKB"/>
</dbReference>
<dbReference type="GO" id="GO:0004930">
    <property type="term" value="F:G protein-coupled receptor activity"/>
    <property type="evidence" value="ECO:0000318"/>
    <property type="project" value="GO_Central"/>
</dbReference>
<dbReference type="GO" id="GO:0007189">
    <property type="term" value="P:adenylate cyclase-activating G protein-coupled receptor signaling pathway"/>
    <property type="evidence" value="ECO:0000318"/>
    <property type="project" value="GO_Central"/>
</dbReference>
<dbReference type="GO" id="GO:0007155">
    <property type="term" value="P:cell adhesion"/>
    <property type="evidence" value="ECO:0000250"/>
    <property type="project" value="UniProtKB"/>
</dbReference>
<dbReference type="GO" id="GO:0016477">
    <property type="term" value="P:cell migration"/>
    <property type="evidence" value="ECO:0000250"/>
    <property type="project" value="UniProtKB"/>
</dbReference>
<dbReference type="GO" id="GO:0007166">
    <property type="term" value="P:cell surface receptor signaling pathway"/>
    <property type="evidence" value="ECO:0007669"/>
    <property type="project" value="InterPro"/>
</dbReference>
<dbReference type="GO" id="GO:0071621">
    <property type="term" value="P:granulocyte chemotaxis"/>
    <property type="evidence" value="ECO:0000250"/>
    <property type="project" value="UniProtKB"/>
</dbReference>
<dbReference type="GO" id="GO:0006954">
    <property type="term" value="P:inflammatory response"/>
    <property type="evidence" value="ECO:0007669"/>
    <property type="project" value="UniProtKB-KW"/>
</dbReference>
<dbReference type="CDD" id="cd00054">
    <property type="entry name" value="EGF_CA"/>
    <property type="match status" value="4"/>
</dbReference>
<dbReference type="FunFam" id="2.10.25.10:FF:000177">
    <property type="entry name" value="Adhesion G protein-coupled receptor E2"/>
    <property type="match status" value="1"/>
</dbReference>
<dbReference type="FunFam" id="2.10.25.10:FF:000216">
    <property type="entry name" value="Adhesion G protein-coupled receptor E2"/>
    <property type="match status" value="1"/>
</dbReference>
<dbReference type="FunFam" id="2.10.25.10:FF:000269">
    <property type="entry name" value="Adhesion G protein-coupled receptor E2"/>
    <property type="match status" value="1"/>
</dbReference>
<dbReference type="FunFam" id="2.10.25.10:FF:000382">
    <property type="entry name" value="Adhesion G protein-coupled receptor E2"/>
    <property type="match status" value="1"/>
</dbReference>
<dbReference type="FunFam" id="2.10.25.10:FF:000422">
    <property type="entry name" value="Adhesion G protein-coupled receptor E2"/>
    <property type="match status" value="1"/>
</dbReference>
<dbReference type="FunFam" id="1.20.1070.10:FF:000054">
    <property type="entry name" value="Adhesion G protein-coupled receptor E3"/>
    <property type="match status" value="1"/>
</dbReference>
<dbReference type="FunFam" id="2.60.220.50:FF:000007">
    <property type="entry name" value="Adhesion G protein-coupled receptor E5"/>
    <property type="match status" value="1"/>
</dbReference>
<dbReference type="Gene3D" id="2.60.220.50">
    <property type="match status" value="1"/>
</dbReference>
<dbReference type="Gene3D" id="2.10.25.10">
    <property type="entry name" value="Laminin"/>
    <property type="match status" value="5"/>
</dbReference>
<dbReference type="Gene3D" id="1.20.1070.10">
    <property type="entry name" value="Rhodopsin 7-helix transmembrane proteins"/>
    <property type="match status" value="1"/>
</dbReference>
<dbReference type="InterPro" id="IPR001881">
    <property type="entry name" value="EGF-like_Ca-bd_dom"/>
</dbReference>
<dbReference type="InterPro" id="IPR000742">
    <property type="entry name" value="EGF-like_dom"/>
</dbReference>
<dbReference type="InterPro" id="IPR000152">
    <property type="entry name" value="EGF-type_Asp/Asn_hydroxyl_site"/>
</dbReference>
<dbReference type="InterPro" id="IPR018097">
    <property type="entry name" value="EGF_Ca-bd_CS"/>
</dbReference>
<dbReference type="InterPro" id="IPR057244">
    <property type="entry name" value="GAIN_B"/>
</dbReference>
<dbReference type="InterPro" id="IPR046338">
    <property type="entry name" value="GAIN_dom_sf"/>
</dbReference>
<dbReference type="InterPro" id="IPR017981">
    <property type="entry name" value="GPCR_2-like_7TM"/>
</dbReference>
<dbReference type="InterPro" id="IPR003056">
    <property type="entry name" value="GPCR_2_ADGRE2_ADGRE5"/>
</dbReference>
<dbReference type="InterPro" id="IPR000832">
    <property type="entry name" value="GPCR_2_secretin-like"/>
</dbReference>
<dbReference type="InterPro" id="IPR017983">
    <property type="entry name" value="GPCR_2_secretin-like_CS"/>
</dbReference>
<dbReference type="InterPro" id="IPR000203">
    <property type="entry name" value="GPS"/>
</dbReference>
<dbReference type="InterPro" id="IPR009030">
    <property type="entry name" value="Growth_fac_rcpt_cys_sf"/>
</dbReference>
<dbReference type="InterPro" id="IPR049883">
    <property type="entry name" value="NOTCH1_EGF-like"/>
</dbReference>
<dbReference type="PANTHER" id="PTHR12011:SF328">
    <property type="entry name" value="ADHESION G PROTEIN-COUPLED RECEPTOR E2"/>
    <property type="match status" value="1"/>
</dbReference>
<dbReference type="PANTHER" id="PTHR12011">
    <property type="entry name" value="ADHESION G-PROTEIN COUPLED RECEPTOR"/>
    <property type="match status" value="1"/>
</dbReference>
<dbReference type="Pfam" id="PF00002">
    <property type="entry name" value="7tm_2"/>
    <property type="match status" value="1"/>
</dbReference>
<dbReference type="Pfam" id="PF07645">
    <property type="entry name" value="EGF_CA"/>
    <property type="match status" value="4"/>
</dbReference>
<dbReference type="Pfam" id="PF01825">
    <property type="entry name" value="GPS"/>
    <property type="match status" value="1"/>
</dbReference>
<dbReference type="PRINTS" id="PR01278">
    <property type="entry name" value="CD97PROTEIN"/>
</dbReference>
<dbReference type="PRINTS" id="PR00249">
    <property type="entry name" value="GPCRSECRETIN"/>
</dbReference>
<dbReference type="SMART" id="SM00181">
    <property type="entry name" value="EGF"/>
    <property type="match status" value="5"/>
</dbReference>
<dbReference type="SMART" id="SM00179">
    <property type="entry name" value="EGF_CA"/>
    <property type="match status" value="4"/>
</dbReference>
<dbReference type="SMART" id="SM00303">
    <property type="entry name" value="GPS"/>
    <property type="match status" value="1"/>
</dbReference>
<dbReference type="SUPFAM" id="SSF57196">
    <property type="entry name" value="EGF/Laminin"/>
    <property type="match status" value="1"/>
</dbReference>
<dbReference type="SUPFAM" id="SSF57184">
    <property type="entry name" value="Growth factor receptor domain"/>
    <property type="match status" value="1"/>
</dbReference>
<dbReference type="PROSITE" id="PS00010">
    <property type="entry name" value="ASX_HYDROXYL"/>
    <property type="match status" value="4"/>
</dbReference>
<dbReference type="PROSITE" id="PS50026">
    <property type="entry name" value="EGF_3"/>
    <property type="match status" value="4"/>
</dbReference>
<dbReference type="PROSITE" id="PS01187">
    <property type="entry name" value="EGF_CA"/>
    <property type="match status" value="4"/>
</dbReference>
<dbReference type="PROSITE" id="PS00650">
    <property type="entry name" value="G_PROTEIN_RECEP_F2_2"/>
    <property type="match status" value="1"/>
</dbReference>
<dbReference type="PROSITE" id="PS50261">
    <property type="entry name" value="G_PROTEIN_RECEP_F2_4"/>
    <property type="match status" value="1"/>
</dbReference>
<dbReference type="PROSITE" id="PS50221">
    <property type="entry name" value="GAIN_B"/>
    <property type="match status" value="1"/>
</dbReference>
<keyword id="KW-0068">Autocatalytic cleavage</keyword>
<keyword id="KW-0106">Calcium</keyword>
<keyword id="KW-0130">Cell adhesion</keyword>
<keyword id="KW-1003">Cell membrane</keyword>
<keyword id="KW-0966">Cell projection</keyword>
<keyword id="KW-1015">Disulfide bond</keyword>
<keyword id="KW-0245">EGF-like domain</keyword>
<keyword id="KW-0297">G-protein coupled receptor</keyword>
<keyword id="KW-0325">Glycoprotein</keyword>
<keyword id="KW-0395">Inflammatory response</keyword>
<keyword id="KW-0472">Membrane</keyword>
<keyword id="KW-0675">Receptor</keyword>
<keyword id="KW-1185">Reference proteome</keyword>
<keyword id="KW-0677">Repeat</keyword>
<keyword id="KW-0732">Signal</keyword>
<keyword id="KW-0807">Transducer</keyword>
<keyword id="KW-0812">Transmembrane</keyword>
<keyword id="KW-1133">Transmembrane helix</keyword>
<organism>
    <name type="scientific">Macaca mulatta</name>
    <name type="common">Rhesus macaque</name>
    <dbReference type="NCBI Taxonomy" id="9544"/>
    <lineage>
        <taxon>Eukaryota</taxon>
        <taxon>Metazoa</taxon>
        <taxon>Chordata</taxon>
        <taxon>Craniata</taxon>
        <taxon>Vertebrata</taxon>
        <taxon>Euteleostomi</taxon>
        <taxon>Mammalia</taxon>
        <taxon>Eutheria</taxon>
        <taxon>Euarchontoglires</taxon>
        <taxon>Primates</taxon>
        <taxon>Haplorrhini</taxon>
        <taxon>Catarrhini</taxon>
        <taxon>Cercopithecidae</taxon>
        <taxon>Cercopithecinae</taxon>
        <taxon>Macaca</taxon>
    </lineage>
</organism>
<evidence type="ECO:0000250" key="1"/>
<evidence type="ECO:0000250" key="2">
    <source>
        <dbReference type="UniProtKB" id="Q9UHX3"/>
    </source>
</evidence>
<evidence type="ECO:0000255" key="3"/>
<evidence type="ECO:0000255" key="4">
    <source>
        <dbReference type="PROSITE-ProRule" id="PRU00076"/>
    </source>
</evidence>
<evidence type="ECO:0000255" key="5">
    <source>
        <dbReference type="PROSITE-ProRule" id="PRU00098"/>
    </source>
</evidence>
<evidence type="ECO:0000256" key="6">
    <source>
        <dbReference type="SAM" id="MobiDB-lite"/>
    </source>
</evidence>
<evidence type="ECO:0000305" key="7"/>
<name>AGRE2_MACMU</name>
<reference key="1">
    <citation type="submission" date="2005-09" db="EMBL/GenBank/DDBJ databases">
        <title>A unique mode of concerted evolution of the EGF-TM7 receptor chimera EMR2.</title>
        <authorList>
            <person name="Kwakkenbos M.J."/>
            <person name="Matmati M."/>
            <person name="Pouwels W."/>
            <person name="Wang Y."/>
            <person name="Bontrop R.E."/>
            <person name="Heidt P.J."/>
            <person name="Hoek R.M."/>
            <person name="Hamann J."/>
        </authorList>
    </citation>
    <scope>NUCLEOTIDE SEQUENCE [MRNA]</scope>
</reference>
<sequence>MGGRVFLAFCVWLTLLGAETQDSRDCARWCPENSSCVNATACRCNPGFSSSSEIFTSPTEICDDINECVPPSKVSCGKSSDCRNTEGSYDCVCNPGYELVSGAKTFKNESENTCQDVDECQQNPRLCKSYGTCVNTLGSFTCQCLPGFKFKPEDPKLCTDVNECTSGQNPCHSSTHCLNNVGSYQCRCRPGWQPIPGSPNGPNNTICEDVDECSSGLHQCDNSTVCFNTVGSYTCRCRPGWEPKHGIPNNQKDTVCKDMNFPTWTLPPGVHSQTLSQFFNKVQDLDRDFKTSSAKVTIQSILKELDELLEAPGDLETLPRFQQHCVATHLLDGLEDVLRGLSKNPSIGLLNFSYPAGTEFSLEVQKQVDRNVTLRQNQATMQLHWNLAQKSGDPGPSVVGLVSVPGMGKLLAEAPLVSEPENQVVRNETHQGLLPILLSDVISAFLSNNDTQNLSSPVTFIFSHRSVIPRRKVLCVFWEHGQNGCGHWATTGCSTMDTRDTSTICRCTHLSSFAVLMAPYDVQEEDPVLTVITYMGLSLSLLCLLLAALTFLLCKAIQNISTSLHLQLSLCLLLAHLLFLVAIDRTEHEVLCAIIASALHYLYLAAFTWMLLEALYLFLTARNLMVVNYSSINRFTKKLMFPVAYGVPAVTVAISAASRPHLYGTPSRCWLQPEKGFIWGFLGPVCAIFSVNLALLLVTLWILKNRLSSLNNEVSTLQNTRMLAFKATAQLFILGCTWCLGILQVGPAARVMAYLFTIINSLQGVFIFLVYCLLSQQVREQYRKWSKGFRKLRTESEMHTLSSSAKRDTPKPSTPGLLGLQS</sequence>
<protein>
    <recommendedName>
        <fullName>Adhesion G protein-coupled receptor E2</fullName>
    </recommendedName>
    <alternativeName>
        <fullName>EGF-like module receptor 2</fullName>
    </alternativeName>
    <alternativeName>
        <fullName>EGF-like module-containing mucin-like hormone receptor-like 2</fullName>
    </alternativeName>
    <cdAntigenName>CD312</cdAntigenName>
</protein>
<proteinExistence type="evidence at transcript level"/>
<comment type="function">
    <text evidence="2">Cell surface receptor that binds to the chondroitin sulfate moiety of glycosaminoglycan chains and promotes cell attachment. Promotes granulocyte chemotaxis, degranulation and adhesion. In macrophages, promotes the release of inflammatory cytokines, including IL8 and TNF. Signals probably through G-proteins.</text>
</comment>
<comment type="subunit">
    <text evidence="2">Forms a heterodimer, consisting of a large extracellular region non-covalently linked to a seven-transmembrane moiety. Interacts with chondroitin sulfate; the interaction with chondroitin sulfate is calcium-dependent. Interacts with CD55 (By similarity).</text>
</comment>
<comment type="subcellular location">
    <subcellularLocation>
        <location evidence="2">Cell membrane</location>
        <topology>Multi-pass membrane protein</topology>
    </subcellularLocation>
    <subcellularLocation>
        <location evidence="2">Cell projection</location>
        <location evidence="2">Ruffle membrane</location>
        <topology evidence="1">Multi-pass membrane protein</topology>
    </subcellularLocation>
    <text evidence="2">Localized at the leading edge of migrating cells.</text>
</comment>
<comment type="domain">
    <text evidence="2">The GPS region of the GAIN-B domain is necessary, but not sufficient for receptor cleavage, which require the entire extracellular stalk.</text>
</comment>
<comment type="domain">
    <text evidence="2">Binding to chondroitin sulfate is mediated by the fourth EGF domain.</text>
</comment>
<comment type="PTM">
    <text evidence="2">Autoproteolytically cleaved into 2 subunits, an extracellular alpha subunit and a seven-transmembrane beta subunit.</text>
</comment>
<comment type="similarity">
    <text evidence="7">Belongs to the G-protein coupled receptor 2 family. Adhesion G-protein coupled receptor (ADGR) subfamily.</text>
</comment>
<feature type="signal peptide" evidence="3">
    <location>
        <begin position="1"/>
        <end position="18"/>
    </location>
</feature>
<feature type="chain" id="PRO_0000250961" description="Adhesion G protein-coupled receptor E2">
    <location>
        <begin position="19"/>
        <end position="822"/>
    </location>
</feature>
<feature type="topological domain" description="Extracellular" evidence="7">
    <location>
        <begin position="19"/>
        <end position="530"/>
    </location>
</feature>
<feature type="transmembrane region" description="Helical; Name=1" evidence="3">
    <location>
        <begin position="531"/>
        <end position="551"/>
    </location>
</feature>
<feature type="topological domain" description="Cytoplasmic" evidence="7">
    <location>
        <begin position="552"/>
        <end position="562"/>
    </location>
</feature>
<feature type="transmembrane region" description="Helical; Name=2" evidence="3">
    <location>
        <begin position="563"/>
        <end position="583"/>
    </location>
</feature>
<feature type="topological domain" description="Extracellular" evidence="7">
    <location>
        <begin position="584"/>
        <end position="589"/>
    </location>
</feature>
<feature type="transmembrane region" description="Helical; Name=3" evidence="3">
    <location>
        <begin position="590"/>
        <end position="610"/>
    </location>
</feature>
<feature type="topological domain" description="Cytoplasmic" evidence="7">
    <location>
        <begin position="611"/>
        <end position="637"/>
    </location>
</feature>
<feature type="transmembrane region" description="Helical; Name=4" evidence="3">
    <location>
        <begin position="638"/>
        <end position="658"/>
    </location>
</feature>
<feature type="topological domain" description="Extracellular" evidence="7">
    <location>
        <begin position="659"/>
        <end position="676"/>
    </location>
</feature>
<feature type="transmembrane region" description="Helical; Name=5" evidence="3">
    <location>
        <begin position="677"/>
        <end position="697"/>
    </location>
</feature>
<feature type="topological domain" description="Cytoplasmic" evidence="7">
    <location>
        <begin position="698"/>
        <end position="728"/>
    </location>
</feature>
<feature type="transmembrane region" description="Helical; Name=6" evidence="3">
    <location>
        <begin position="729"/>
        <end position="749"/>
    </location>
</feature>
<feature type="topological domain" description="Extracellular" evidence="7">
    <location>
        <begin position="750"/>
        <end position="753"/>
    </location>
</feature>
<feature type="transmembrane region" description="Helical; Name=7" evidence="3">
    <location>
        <begin position="754"/>
        <end position="774"/>
    </location>
</feature>
<feature type="topological domain" description="Cytoplasmic" evidence="7">
    <location>
        <begin position="775"/>
        <end position="822"/>
    </location>
</feature>
<feature type="domain" description="EGF-like 1" evidence="4">
    <location>
        <begin position="22"/>
        <end position="63"/>
    </location>
</feature>
<feature type="domain" description="EGF-like 1; calcium-binding" evidence="4">
    <location>
        <begin position="64"/>
        <end position="103"/>
    </location>
</feature>
<feature type="domain" description="EGF-like 2; calcium-binding" evidence="4">
    <location>
        <begin position="116"/>
        <end position="159"/>
    </location>
</feature>
<feature type="domain" description="EGF-like 3; calcium-binding" evidence="4">
    <location>
        <begin position="160"/>
        <end position="198"/>
    </location>
</feature>
<feature type="domain" description="EGF-like 4; calcium-binding" evidence="4">
    <location>
        <begin position="209"/>
        <end position="247"/>
    </location>
</feature>
<feature type="domain" description="GAIN-B" evidence="5">
    <location>
        <begin position="351"/>
        <end position="523"/>
    </location>
</feature>
<feature type="region of interest" description="GPS" evidence="5">
    <location>
        <begin position="475"/>
        <end position="523"/>
    </location>
</feature>
<feature type="region of interest" description="Disordered" evidence="6">
    <location>
        <begin position="797"/>
        <end position="822"/>
    </location>
</feature>
<feature type="site" description="Cleavage; by autolysis" evidence="5">
    <location>
        <begin position="510"/>
        <end position="511"/>
    </location>
</feature>
<feature type="glycosylation site" description="N-linked (GlcNAc...) asparagine" evidence="3">
    <location>
        <position position="33"/>
    </location>
</feature>
<feature type="glycosylation site" description="N-linked (GlcNAc...) asparagine" evidence="3">
    <location>
        <position position="38"/>
    </location>
</feature>
<feature type="glycosylation site" description="N-linked (GlcNAc...) asparagine" evidence="3">
    <location>
        <position position="108"/>
    </location>
</feature>
<feature type="glycosylation site" description="N-linked (GlcNAc...) asparagine" evidence="3">
    <location>
        <position position="203"/>
    </location>
</feature>
<feature type="glycosylation site" description="N-linked (GlcNAc...) asparagine" evidence="3">
    <location>
        <position position="222"/>
    </location>
</feature>
<feature type="glycosylation site" description="N-linked (GlcNAc...) asparagine" evidence="3">
    <location>
        <position position="351"/>
    </location>
</feature>
<feature type="glycosylation site" description="N-linked (GlcNAc...) asparagine" evidence="3">
    <location>
        <position position="371"/>
    </location>
</feature>
<feature type="glycosylation site" description="N-linked (GlcNAc...) asparagine" evidence="3">
    <location>
        <position position="427"/>
    </location>
</feature>
<feature type="glycosylation site" description="N-linked (GlcNAc...) asparagine" evidence="3">
    <location>
        <position position="449"/>
    </location>
</feature>
<feature type="glycosylation site" description="N-linked (GlcNAc...) asparagine" evidence="3">
    <location>
        <position position="453"/>
    </location>
</feature>
<feature type="disulfide bond" evidence="4">
    <location>
        <begin position="26"/>
        <end position="36"/>
    </location>
</feature>
<feature type="disulfide bond" evidence="4">
    <location>
        <begin position="30"/>
        <end position="42"/>
    </location>
</feature>
<feature type="disulfide bond" evidence="4">
    <location>
        <begin position="44"/>
        <end position="62"/>
    </location>
</feature>
<feature type="disulfide bond" evidence="4">
    <location>
        <begin position="68"/>
        <end position="82"/>
    </location>
</feature>
<feature type="disulfide bond" evidence="4">
    <location>
        <begin position="76"/>
        <end position="91"/>
    </location>
</feature>
<feature type="disulfide bond" evidence="4">
    <location>
        <begin position="120"/>
        <end position="133"/>
    </location>
</feature>
<feature type="disulfide bond" evidence="4">
    <location>
        <begin position="127"/>
        <end position="142"/>
    </location>
</feature>
<feature type="disulfide bond" evidence="4">
    <location>
        <begin position="144"/>
        <end position="158"/>
    </location>
</feature>
<feature type="disulfide bond" evidence="4">
    <location>
        <begin position="164"/>
        <end position="177"/>
    </location>
</feature>
<feature type="disulfide bond" evidence="4">
    <location>
        <begin position="171"/>
        <end position="186"/>
    </location>
</feature>
<feature type="disulfide bond" evidence="4">
    <location>
        <begin position="213"/>
        <end position="226"/>
    </location>
</feature>
<feature type="disulfide bond" evidence="4">
    <location>
        <begin position="220"/>
        <end position="235"/>
    </location>
</feature>
<feature type="disulfide bond" evidence="5">
    <location>
        <begin position="475"/>
        <end position="505"/>
    </location>
</feature>
<feature type="disulfide bond" evidence="5">
    <location>
        <begin position="493"/>
        <end position="507"/>
    </location>
</feature>